<organism>
    <name type="scientific">Streptomyces glaucescens</name>
    <dbReference type="NCBI Taxonomy" id="1907"/>
    <lineage>
        <taxon>Bacteria</taxon>
        <taxon>Bacillati</taxon>
        <taxon>Actinomycetota</taxon>
        <taxon>Actinomycetes</taxon>
        <taxon>Kitasatosporales</taxon>
        <taxon>Streptomycetaceae</taxon>
        <taxon>Streptomyces</taxon>
    </lineage>
</organism>
<sequence>MPELSRRRALGAAAALAAAAGTQAVAAPAATAAGHHPGPSTAATGHHPGTPASFDEVYKGRRIQGRPAAGGHHQHHGGGYAVLIDGVELHVMQNADGSWISVVSHYDPVPTPRAAARAAVDELQGARLLPFPAN</sequence>
<accession>P55047</accession>
<proteinExistence type="inferred from homology"/>
<name>TYRT_STRGA</name>
<protein>
    <recommendedName>
        <fullName>Tyrosinase cofactor</fullName>
    </recommendedName>
    <alternativeName>
        <fullName>URF402</fullName>
    </alternativeName>
</protein>
<keyword id="KW-0186">Copper</keyword>
<keyword id="KW-0470">Melanin biosynthesis</keyword>
<keyword id="KW-0732">Signal</keyword>
<feature type="signal peptide" description="Tat-type signal" evidence="1">
    <location>
        <begin position="1"/>
        <end position="32"/>
    </location>
</feature>
<feature type="chain" id="PRO_0000065707" description="Tyrosinase cofactor">
    <location>
        <begin position="33"/>
        <end position="134"/>
    </location>
</feature>
<feature type="region of interest" description="Disordered" evidence="2">
    <location>
        <begin position="27"/>
        <end position="76"/>
    </location>
</feature>
<evidence type="ECO:0000255" key="1">
    <source>
        <dbReference type="PROSITE-ProRule" id="PRU00648"/>
    </source>
</evidence>
<evidence type="ECO:0000256" key="2">
    <source>
        <dbReference type="SAM" id="MobiDB-lite"/>
    </source>
</evidence>
<evidence type="ECO:0000305" key="3"/>
<dbReference type="EMBL" id="Y00457">
    <property type="protein sequence ID" value="CAA68512.1"/>
    <property type="molecule type" value="Genomic_DNA"/>
</dbReference>
<dbReference type="PIR" id="A26986">
    <property type="entry name" value="A26986"/>
</dbReference>
<dbReference type="RefSeq" id="WP_043498005.1">
    <property type="nucleotide sequence ID" value="NZ_CP009438.1"/>
</dbReference>
<dbReference type="SMR" id="P55047"/>
<dbReference type="STRING" id="1907.SGLAU_02715"/>
<dbReference type="eggNOG" id="ENOG502ZNXC">
    <property type="taxonomic scope" value="Bacteria"/>
</dbReference>
<dbReference type="OrthoDB" id="3405860at2"/>
<dbReference type="GO" id="GO:0005507">
    <property type="term" value="F:copper ion binding"/>
    <property type="evidence" value="ECO:0007669"/>
    <property type="project" value="InterPro"/>
</dbReference>
<dbReference type="GO" id="GO:0042438">
    <property type="term" value="P:melanin biosynthetic process"/>
    <property type="evidence" value="ECO:0007669"/>
    <property type="project" value="UniProtKB-KW"/>
</dbReference>
<dbReference type="Gene3D" id="3.30.1880.10">
    <property type="entry name" value="protein ne1242 domain like"/>
    <property type="match status" value="1"/>
</dbReference>
<dbReference type="InterPro" id="IPR023199">
    <property type="entry name" value="GriE/MELC1_sf"/>
</dbReference>
<dbReference type="InterPro" id="IPR010928">
    <property type="entry name" value="MelC1"/>
</dbReference>
<dbReference type="InterPro" id="IPR006311">
    <property type="entry name" value="TAT_signal"/>
</dbReference>
<dbReference type="NCBIfam" id="NF047833">
    <property type="entry name" value="TyroCdyMelC1"/>
    <property type="match status" value="1"/>
</dbReference>
<dbReference type="Pfam" id="PF06236">
    <property type="entry name" value="MelC1"/>
    <property type="match status" value="1"/>
</dbReference>
<dbReference type="PROSITE" id="PS51318">
    <property type="entry name" value="TAT"/>
    <property type="match status" value="1"/>
</dbReference>
<comment type="function">
    <text>This protein may function to deliver copper to tyrosinase.</text>
</comment>
<comment type="PTM">
    <text>Predicted to be exported by the Tat system. The position of the signal peptide cleavage has not been experimentally proven.</text>
</comment>
<comment type="similarity">
    <text evidence="3">Belongs to the melC1 family.</text>
</comment>
<gene>
    <name type="primary">melC1</name>
</gene>
<reference key="1">
    <citation type="journal article" date="1987" name="Nucleic Acids Res.">
        <title>The promoter of the Streptomyces glaucescens mel operon.</title>
        <authorList>
            <person name="Huber M."/>
            <person name="Huetter R."/>
            <person name="Lerch K."/>
        </authorList>
    </citation>
    <scope>NUCLEOTIDE SEQUENCE [GENOMIC DNA]</scope>
    <source>
        <strain>DSM 40716 / ETH 22794 / Tue 49</strain>
    </source>
</reference>